<evidence type="ECO:0000255" key="1">
    <source>
        <dbReference type="HAMAP-Rule" id="MF_01690"/>
    </source>
</evidence>
<organism>
    <name type="scientific">Tolumonas auensis (strain DSM 9187 / NBRC 110442 / TA 4)</name>
    <dbReference type="NCBI Taxonomy" id="595494"/>
    <lineage>
        <taxon>Bacteria</taxon>
        <taxon>Pseudomonadati</taxon>
        <taxon>Pseudomonadota</taxon>
        <taxon>Gammaproteobacteria</taxon>
        <taxon>Aeromonadales</taxon>
        <taxon>Aeromonadaceae</taxon>
        <taxon>Tolumonas</taxon>
    </lineage>
</organism>
<gene>
    <name evidence="1" type="primary">dapE</name>
    <name type="ordered locus">Tola_1130</name>
</gene>
<protein>
    <recommendedName>
        <fullName evidence="1">Succinyl-diaminopimelate desuccinylase</fullName>
        <shortName evidence="1">SDAP desuccinylase</shortName>
        <ecNumber evidence="1">3.5.1.18</ecNumber>
    </recommendedName>
    <alternativeName>
        <fullName evidence="1">N-succinyl-LL-2,6-diaminoheptanedioate amidohydrolase</fullName>
    </alternativeName>
</protein>
<dbReference type="EC" id="3.5.1.18" evidence="1"/>
<dbReference type="EMBL" id="CP001616">
    <property type="protein sequence ID" value="ACQ92756.1"/>
    <property type="molecule type" value="Genomic_DNA"/>
</dbReference>
<dbReference type="RefSeq" id="WP_012729355.1">
    <property type="nucleotide sequence ID" value="NC_012691.1"/>
</dbReference>
<dbReference type="SMR" id="C4LDG0"/>
<dbReference type="STRING" id="595494.Tola_1130"/>
<dbReference type="KEGG" id="tau:Tola_1130"/>
<dbReference type="eggNOG" id="COG0624">
    <property type="taxonomic scope" value="Bacteria"/>
</dbReference>
<dbReference type="HOGENOM" id="CLU_021802_4_0_6"/>
<dbReference type="OrthoDB" id="9809784at2"/>
<dbReference type="UniPathway" id="UPA00034">
    <property type="reaction ID" value="UER00021"/>
</dbReference>
<dbReference type="Proteomes" id="UP000009073">
    <property type="component" value="Chromosome"/>
</dbReference>
<dbReference type="GO" id="GO:0008777">
    <property type="term" value="F:acetylornithine deacetylase activity"/>
    <property type="evidence" value="ECO:0007669"/>
    <property type="project" value="TreeGrafter"/>
</dbReference>
<dbReference type="GO" id="GO:0050897">
    <property type="term" value="F:cobalt ion binding"/>
    <property type="evidence" value="ECO:0007669"/>
    <property type="project" value="UniProtKB-UniRule"/>
</dbReference>
<dbReference type="GO" id="GO:0009014">
    <property type="term" value="F:succinyl-diaminopimelate desuccinylase activity"/>
    <property type="evidence" value="ECO:0007669"/>
    <property type="project" value="UniProtKB-UniRule"/>
</dbReference>
<dbReference type="GO" id="GO:0008270">
    <property type="term" value="F:zinc ion binding"/>
    <property type="evidence" value="ECO:0007669"/>
    <property type="project" value="UniProtKB-UniRule"/>
</dbReference>
<dbReference type="GO" id="GO:0019877">
    <property type="term" value="P:diaminopimelate biosynthetic process"/>
    <property type="evidence" value="ECO:0007669"/>
    <property type="project" value="UniProtKB-UniRule"/>
</dbReference>
<dbReference type="GO" id="GO:0006526">
    <property type="term" value="P:L-arginine biosynthetic process"/>
    <property type="evidence" value="ECO:0007669"/>
    <property type="project" value="TreeGrafter"/>
</dbReference>
<dbReference type="GO" id="GO:0009089">
    <property type="term" value="P:lysine biosynthetic process via diaminopimelate"/>
    <property type="evidence" value="ECO:0007669"/>
    <property type="project" value="UniProtKB-UniRule"/>
</dbReference>
<dbReference type="CDD" id="cd03891">
    <property type="entry name" value="M20_DapE_proteobac"/>
    <property type="match status" value="1"/>
</dbReference>
<dbReference type="FunFam" id="3.30.70.360:FF:000011">
    <property type="entry name" value="Succinyl-diaminopimelate desuccinylase"/>
    <property type="match status" value="1"/>
</dbReference>
<dbReference type="FunFam" id="3.40.630.10:FF:000005">
    <property type="entry name" value="Succinyl-diaminopimelate desuccinylase"/>
    <property type="match status" value="1"/>
</dbReference>
<dbReference type="FunFam" id="3.40.630.10:FF:000010">
    <property type="entry name" value="Succinyl-diaminopimelate desuccinylase"/>
    <property type="match status" value="1"/>
</dbReference>
<dbReference type="Gene3D" id="3.40.630.10">
    <property type="entry name" value="Zn peptidases"/>
    <property type="match status" value="2"/>
</dbReference>
<dbReference type="HAMAP" id="MF_01690">
    <property type="entry name" value="DapE"/>
    <property type="match status" value="1"/>
</dbReference>
<dbReference type="InterPro" id="IPR001261">
    <property type="entry name" value="ArgE/DapE_CS"/>
</dbReference>
<dbReference type="InterPro" id="IPR036264">
    <property type="entry name" value="Bact_exopeptidase_dim_dom"/>
</dbReference>
<dbReference type="InterPro" id="IPR005941">
    <property type="entry name" value="DapE_proteobac"/>
</dbReference>
<dbReference type="InterPro" id="IPR002933">
    <property type="entry name" value="Peptidase_M20"/>
</dbReference>
<dbReference type="InterPro" id="IPR011650">
    <property type="entry name" value="Peptidase_M20_dimer"/>
</dbReference>
<dbReference type="InterPro" id="IPR050072">
    <property type="entry name" value="Peptidase_M20A"/>
</dbReference>
<dbReference type="NCBIfam" id="TIGR01246">
    <property type="entry name" value="dapE_proteo"/>
    <property type="match status" value="1"/>
</dbReference>
<dbReference type="NCBIfam" id="NF009557">
    <property type="entry name" value="PRK13009.1"/>
    <property type="match status" value="1"/>
</dbReference>
<dbReference type="PANTHER" id="PTHR43808">
    <property type="entry name" value="ACETYLORNITHINE DEACETYLASE"/>
    <property type="match status" value="1"/>
</dbReference>
<dbReference type="PANTHER" id="PTHR43808:SF31">
    <property type="entry name" value="N-ACETYL-L-CITRULLINE DEACETYLASE"/>
    <property type="match status" value="1"/>
</dbReference>
<dbReference type="Pfam" id="PF07687">
    <property type="entry name" value="M20_dimer"/>
    <property type="match status" value="1"/>
</dbReference>
<dbReference type="Pfam" id="PF01546">
    <property type="entry name" value="Peptidase_M20"/>
    <property type="match status" value="1"/>
</dbReference>
<dbReference type="SUPFAM" id="SSF55031">
    <property type="entry name" value="Bacterial exopeptidase dimerisation domain"/>
    <property type="match status" value="1"/>
</dbReference>
<dbReference type="SUPFAM" id="SSF53187">
    <property type="entry name" value="Zn-dependent exopeptidases"/>
    <property type="match status" value="1"/>
</dbReference>
<dbReference type="PROSITE" id="PS00759">
    <property type="entry name" value="ARGE_DAPE_CPG2_2"/>
    <property type="match status" value="1"/>
</dbReference>
<comment type="function">
    <text evidence="1">Catalyzes the hydrolysis of N-succinyl-L,L-diaminopimelic acid (SDAP), forming succinate and LL-2,6-diaminopimelate (DAP), an intermediate involved in the bacterial biosynthesis of lysine and meso-diaminopimelic acid, an essential component of bacterial cell walls.</text>
</comment>
<comment type="catalytic activity">
    <reaction evidence="1">
        <text>N-succinyl-(2S,6S)-2,6-diaminopimelate + H2O = (2S,6S)-2,6-diaminopimelate + succinate</text>
        <dbReference type="Rhea" id="RHEA:22608"/>
        <dbReference type="ChEBI" id="CHEBI:15377"/>
        <dbReference type="ChEBI" id="CHEBI:30031"/>
        <dbReference type="ChEBI" id="CHEBI:57609"/>
        <dbReference type="ChEBI" id="CHEBI:58087"/>
        <dbReference type="EC" id="3.5.1.18"/>
    </reaction>
</comment>
<comment type="cofactor">
    <cofactor evidence="1">
        <name>Zn(2+)</name>
        <dbReference type="ChEBI" id="CHEBI:29105"/>
    </cofactor>
    <cofactor evidence="1">
        <name>Co(2+)</name>
        <dbReference type="ChEBI" id="CHEBI:48828"/>
    </cofactor>
    <text evidence="1">Binds 2 Zn(2+) or Co(2+) ions per subunit.</text>
</comment>
<comment type="pathway">
    <text evidence="1">Amino-acid biosynthesis; L-lysine biosynthesis via DAP pathway; LL-2,6-diaminopimelate from (S)-tetrahydrodipicolinate (succinylase route): step 3/3.</text>
</comment>
<comment type="subunit">
    <text evidence="1">Homodimer.</text>
</comment>
<comment type="similarity">
    <text evidence="1">Belongs to the peptidase M20A family. DapE subfamily.</text>
</comment>
<sequence length="380" mass="41252">MTDSLVLSLAKDLIARPSVTPIDEGCQKMMAEFLAPLGFEIEPMVFHDTTNLWARRGTTGPVFCFAGHTDVVPSGPAEKWHTPPFEPTIIDGMLYGRGAADMKGSIASMMAAVQRFTTDYPAHQGSIAFLITSDEEGPFINGTPKVIETLEARQEKITWCLVGEPSSTNHVGDVVKNGRRGSLTGDLTIYGIQGHVAYPHLAENPVHLAIPALNELASKQWDQGNEFFPATSFQIANINSGTGASNVIPGEMQVQFNFRYSTELTDSQIKQQVAAILDNHGLRYELKWTLSGQPFLTGSGKLVEATQNAIKAITGQETELSTSGGTSDGRFIAPTGAQVIELGPVNATIHKVNECVRVADLETLSDIYYNMMQQLLVDHD</sequence>
<name>DAPE_TOLAT</name>
<proteinExistence type="inferred from homology"/>
<keyword id="KW-0028">Amino-acid biosynthesis</keyword>
<keyword id="KW-0170">Cobalt</keyword>
<keyword id="KW-0220">Diaminopimelate biosynthesis</keyword>
<keyword id="KW-0378">Hydrolase</keyword>
<keyword id="KW-0457">Lysine biosynthesis</keyword>
<keyword id="KW-0479">Metal-binding</keyword>
<keyword id="KW-1185">Reference proteome</keyword>
<keyword id="KW-0862">Zinc</keyword>
<feature type="chain" id="PRO_1000215925" description="Succinyl-diaminopimelate desuccinylase">
    <location>
        <begin position="1"/>
        <end position="380"/>
    </location>
</feature>
<feature type="active site" evidence="1">
    <location>
        <position position="70"/>
    </location>
</feature>
<feature type="active site" description="Proton acceptor" evidence="1">
    <location>
        <position position="135"/>
    </location>
</feature>
<feature type="binding site" evidence="1">
    <location>
        <position position="68"/>
    </location>
    <ligand>
        <name>Zn(2+)</name>
        <dbReference type="ChEBI" id="CHEBI:29105"/>
        <label>1</label>
    </ligand>
</feature>
<feature type="binding site" evidence="1">
    <location>
        <position position="101"/>
    </location>
    <ligand>
        <name>Zn(2+)</name>
        <dbReference type="ChEBI" id="CHEBI:29105"/>
        <label>1</label>
    </ligand>
</feature>
<feature type="binding site" evidence="1">
    <location>
        <position position="101"/>
    </location>
    <ligand>
        <name>Zn(2+)</name>
        <dbReference type="ChEBI" id="CHEBI:29105"/>
        <label>2</label>
    </ligand>
</feature>
<feature type="binding site" evidence="1">
    <location>
        <position position="136"/>
    </location>
    <ligand>
        <name>Zn(2+)</name>
        <dbReference type="ChEBI" id="CHEBI:29105"/>
        <label>2</label>
    </ligand>
</feature>
<feature type="binding site" evidence="1">
    <location>
        <position position="164"/>
    </location>
    <ligand>
        <name>Zn(2+)</name>
        <dbReference type="ChEBI" id="CHEBI:29105"/>
        <label>1</label>
    </ligand>
</feature>
<feature type="binding site" evidence="1">
    <location>
        <position position="350"/>
    </location>
    <ligand>
        <name>Zn(2+)</name>
        <dbReference type="ChEBI" id="CHEBI:29105"/>
        <label>2</label>
    </ligand>
</feature>
<reference key="1">
    <citation type="submission" date="2009-05" db="EMBL/GenBank/DDBJ databases">
        <title>Complete sequence of Tolumonas auensis DSM 9187.</title>
        <authorList>
            <consortium name="US DOE Joint Genome Institute"/>
            <person name="Lucas S."/>
            <person name="Copeland A."/>
            <person name="Lapidus A."/>
            <person name="Glavina del Rio T."/>
            <person name="Tice H."/>
            <person name="Bruce D."/>
            <person name="Goodwin L."/>
            <person name="Pitluck S."/>
            <person name="Chertkov O."/>
            <person name="Brettin T."/>
            <person name="Detter J.C."/>
            <person name="Han C."/>
            <person name="Larimer F."/>
            <person name="Land M."/>
            <person name="Hauser L."/>
            <person name="Kyrpides N."/>
            <person name="Mikhailova N."/>
            <person name="Spring S."/>
            <person name="Beller H."/>
        </authorList>
    </citation>
    <scope>NUCLEOTIDE SEQUENCE [LARGE SCALE GENOMIC DNA]</scope>
    <source>
        <strain>DSM 9187 / NBRC 110442 / TA 4</strain>
    </source>
</reference>
<accession>C4LDG0</accession>